<protein>
    <recommendedName>
        <fullName>Putative pentatricopeptide repeat-containing protein At5g36300</fullName>
    </recommendedName>
</protein>
<organism>
    <name type="scientific">Arabidopsis thaliana</name>
    <name type="common">Mouse-ear cress</name>
    <dbReference type="NCBI Taxonomy" id="3702"/>
    <lineage>
        <taxon>Eukaryota</taxon>
        <taxon>Viridiplantae</taxon>
        <taxon>Streptophyta</taxon>
        <taxon>Embryophyta</taxon>
        <taxon>Tracheophyta</taxon>
        <taxon>Spermatophyta</taxon>
        <taxon>Magnoliopsida</taxon>
        <taxon>eudicotyledons</taxon>
        <taxon>Gunneridae</taxon>
        <taxon>Pentapetalae</taxon>
        <taxon>rosids</taxon>
        <taxon>malvids</taxon>
        <taxon>Brassicales</taxon>
        <taxon>Brassicaceae</taxon>
        <taxon>Camelineae</taxon>
        <taxon>Arabidopsis</taxon>
    </lineage>
</organism>
<feature type="chain" id="PRO_0000363539" description="Putative pentatricopeptide repeat-containing protein At5g36300">
    <location>
        <begin position="1"/>
        <end position="330"/>
    </location>
</feature>
<feature type="repeat" description="PPR 1">
    <location>
        <begin position="10"/>
        <end position="44"/>
    </location>
</feature>
<feature type="repeat" description="PPR 2">
    <location>
        <begin position="45"/>
        <end position="75"/>
    </location>
</feature>
<feature type="repeat" description="PPR 3">
    <location>
        <begin position="83"/>
        <end position="113"/>
    </location>
</feature>
<feature type="repeat" description="PPR 4">
    <location>
        <begin position="114"/>
        <end position="148"/>
    </location>
</feature>
<feature type="repeat" description="PPR 5">
    <location>
        <begin position="149"/>
        <end position="179"/>
    </location>
</feature>
<feature type="repeat" description="PPR 6">
    <location>
        <begin position="185"/>
        <end position="215"/>
    </location>
</feature>
<feature type="repeat" description="PPR 7">
    <location>
        <begin position="231"/>
        <end position="265"/>
    </location>
</feature>
<feature type="repeat" description="PPR 8">
    <location>
        <begin position="266"/>
        <end position="296"/>
    </location>
</feature>
<feature type="repeat" description="PPR 9">
    <location>
        <begin position="302"/>
        <end position="330"/>
    </location>
</feature>
<proteinExistence type="inferred from homology"/>
<reference key="1">
    <citation type="submission" date="2000-06" db="EMBL/GenBank/DDBJ databases">
        <title>Structural analysis of Arabidopsis thaliana chromosome 5. XI.</title>
        <authorList>
            <person name="Kaneko T."/>
            <person name="Katoh T."/>
            <person name="Asamizu E."/>
            <person name="Sato S."/>
            <person name="Nakamura Y."/>
            <person name="Kotani H."/>
            <person name="Tabata S."/>
        </authorList>
    </citation>
    <scope>NUCLEOTIDE SEQUENCE [LARGE SCALE GENOMIC DNA]</scope>
    <source>
        <strain>cv. Columbia</strain>
    </source>
</reference>
<reference key="2">
    <citation type="journal article" date="2017" name="Plant J.">
        <title>Araport11: a complete reannotation of the Arabidopsis thaliana reference genome.</title>
        <authorList>
            <person name="Cheng C.Y."/>
            <person name="Krishnakumar V."/>
            <person name="Chan A.P."/>
            <person name="Thibaud-Nissen F."/>
            <person name="Schobel S."/>
            <person name="Town C.D."/>
        </authorList>
    </citation>
    <scope>GENOME REANNOTATION</scope>
    <source>
        <strain>cv. Columbia</strain>
    </source>
</reference>
<reference key="3">
    <citation type="journal article" date="2004" name="Plant Cell">
        <title>Genome-wide analysis of Arabidopsis pentatricopeptide repeat proteins reveals their essential role in organelle biogenesis.</title>
        <authorList>
            <person name="Lurin C."/>
            <person name="Andres C."/>
            <person name="Aubourg S."/>
            <person name="Bellaoui M."/>
            <person name="Bitton F."/>
            <person name="Bruyere C."/>
            <person name="Caboche M."/>
            <person name="Debast C."/>
            <person name="Gualberto J."/>
            <person name="Hoffmann B."/>
            <person name="Lecharny A."/>
            <person name="Le Ret M."/>
            <person name="Martin-Magniette M.-L."/>
            <person name="Mireau H."/>
            <person name="Peeters N."/>
            <person name="Renou J.-P."/>
            <person name="Szurek B."/>
            <person name="Taconnat L."/>
            <person name="Small I."/>
        </authorList>
    </citation>
    <scope>GENE FAMILY</scope>
</reference>
<sequence length="330" mass="38107">MAPISHTRISLSMYNSWIRYFCRTGETNEAMSLLAEIHSLGSRPDPLSYVSFIETLASLRRTLEADALFHEVVRFMIYGSYSVRLYNALVSRYLRKEVSWRVVNEMKKRKFRLNSFVYGKIIRIYRDNGMWKKALGIVEEIREIGLPMDVEIYNSVIDTFGKYGELDEELQVLEKLQRSSDSRPNIRTWNSLIRWHCHHGAVDMALELFTMIFEDIGELVGKLKSQGVAPSANLFCTLANAYAQQGLCKQTVKVLKMMENEGIEPNLIMLNVLINAFGTAGKHMEALSIYHHIKETVWIHPDVVTYSTLMKAFTRAKKYEMVCSFYLVTL</sequence>
<gene>
    <name type="ordered locus">At5g36300</name>
    <name type="ORF">T30G6.18</name>
</gene>
<dbReference type="EMBL" id="AP002549">
    <property type="protein sequence ID" value="BAB10889.1"/>
    <property type="status" value="ALT_SEQ"/>
    <property type="molecule type" value="Genomic_DNA"/>
</dbReference>
<dbReference type="EMBL" id="AB026661">
    <property type="protein sequence ID" value="BAB10889.1"/>
    <property type="status" value="JOINED"/>
    <property type="molecule type" value="Genomic_DNA"/>
</dbReference>
<dbReference type="EMBL" id="CP002688">
    <property type="protein sequence ID" value="AED94067.1"/>
    <property type="status" value="ALT_SEQ"/>
    <property type="molecule type" value="Genomic_DNA"/>
</dbReference>
<dbReference type="EMBL" id="CP002688">
    <property type="protein sequence ID" value="ANM71076.1"/>
    <property type="molecule type" value="Genomic_DNA"/>
</dbReference>
<dbReference type="RefSeq" id="NP_001154751.1">
    <property type="nucleotide sequence ID" value="NM_001161279.1"/>
</dbReference>
<dbReference type="RefSeq" id="NP_001332632.1">
    <property type="nucleotide sequence ID" value="NM_001344138.1"/>
</dbReference>
<dbReference type="SMR" id="Q9FFZ2"/>
<dbReference type="EnsemblPlants" id="AT5G36300.2">
    <property type="protein sequence ID" value="AT5G36300.2"/>
    <property type="gene ID" value="AT5G36300"/>
</dbReference>
<dbReference type="GeneID" id="3771327"/>
<dbReference type="Gramene" id="AT5G36300.2">
    <property type="protein sequence ID" value="AT5G36300.2"/>
    <property type="gene ID" value="AT5G36300"/>
</dbReference>
<dbReference type="KEGG" id="ath:AT5G36300"/>
<dbReference type="Araport" id="AT5G36300"/>
<dbReference type="TAIR" id="AT5G36300"/>
<dbReference type="InParanoid" id="Q9FFZ2"/>
<dbReference type="OMA" id="PTLINTH"/>
<dbReference type="PRO" id="PR:Q9FFZ2"/>
<dbReference type="Proteomes" id="UP000006548">
    <property type="component" value="Chromosome 5"/>
</dbReference>
<dbReference type="ExpressionAtlas" id="Q9FFZ2">
    <property type="expression patterns" value="baseline and differential"/>
</dbReference>
<dbReference type="Gene3D" id="1.25.40.10">
    <property type="entry name" value="Tetratricopeptide repeat domain"/>
    <property type="match status" value="3"/>
</dbReference>
<dbReference type="InterPro" id="IPR002885">
    <property type="entry name" value="Pentatricopeptide_rpt"/>
</dbReference>
<dbReference type="InterPro" id="IPR051222">
    <property type="entry name" value="PPR/CCM1_RNA-binding"/>
</dbReference>
<dbReference type="InterPro" id="IPR011990">
    <property type="entry name" value="TPR-like_helical_dom_sf"/>
</dbReference>
<dbReference type="NCBIfam" id="TIGR00756">
    <property type="entry name" value="PPR"/>
    <property type="match status" value="3"/>
</dbReference>
<dbReference type="PANTHER" id="PTHR47942:SF13">
    <property type="entry name" value="OS06G0710800 PROTEIN"/>
    <property type="match status" value="1"/>
</dbReference>
<dbReference type="PANTHER" id="PTHR47942">
    <property type="entry name" value="TETRATRICOPEPTIDE REPEAT (TPR)-LIKE SUPERFAMILY PROTEIN-RELATED"/>
    <property type="match status" value="1"/>
</dbReference>
<dbReference type="Pfam" id="PF01535">
    <property type="entry name" value="PPR"/>
    <property type="match status" value="3"/>
</dbReference>
<dbReference type="Pfam" id="PF13812">
    <property type="entry name" value="PPR_3"/>
    <property type="match status" value="2"/>
</dbReference>
<dbReference type="PROSITE" id="PS51375">
    <property type="entry name" value="PPR"/>
    <property type="match status" value="8"/>
</dbReference>
<keyword id="KW-1185">Reference proteome</keyword>
<keyword id="KW-0677">Repeat</keyword>
<accession>Q9FFZ2</accession>
<accession>F4K2Z3</accession>
<evidence type="ECO:0000305" key="1"/>
<comment type="similarity">
    <text evidence="1">Belongs to the PPR family. P subfamily.</text>
</comment>
<comment type="sequence caution" evidence="1">
    <conflict type="erroneous gene model prediction">
        <sequence resource="EMBL-CDS" id="AED94067"/>
    </conflict>
</comment>
<comment type="sequence caution" evidence="1">
    <conflict type="erroneous gene model prediction">
        <sequence resource="EMBL-CDS" id="BAB10889"/>
    </conflict>
</comment>
<comment type="online information" name="Pentatricopeptide repeat proteins">
    <link uri="https://ppr.plantenergy.uwa.edu.au"/>
</comment>
<name>PP402_ARATH</name>